<gene>
    <name evidence="1" type="primary">rbsA1</name>
    <name type="ordered locus">BTH_I2434</name>
</gene>
<protein>
    <recommendedName>
        <fullName evidence="1">Ribose import ATP-binding protein RbsA 1</fullName>
        <ecNumber evidence="1">7.5.2.7</ecNumber>
    </recommendedName>
</protein>
<feature type="chain" id="PRO_0000261052" description="Ribose import ATP-binding protein RbsA 1">
    <location>
        <begin position="1"/>
        <end position="506"/>
    </location>
</feature>
<feature type="domain" description="ABC transporter 1" evidence="1">
    <location>
        <begin position="5"/>
        <end position="241"/>
    </location>
</feature>
<feature type="domain" description="ABC transporter 2" evidence="1">
    <location>
        <begin position="254"/>
        <end position="498"/>
    </location>
</feature>
<feature type="binding site" evidence="1">
    <location>
        <begin position="37"/>
        <end position="44"/>
    </location>
    <ligand>
        <name>ATP</name>
        <dbReference type="ChEBI" id="CHEBI:30616"/>
    </ligand>
</feature>
<evidence type="ECO:0000255" key="1">
    <source>
        <dbReference type="HAMAP-Rule" id="MF_01716"/>
    </source>
</evidence>
<evidence type="ECO:0000305" key="2"/>
<name>RBSA1_BURTA</name>
<keyword id="KW-0067">ATP-binding</keyword>
<keyword id="KW-0997">Cell inner membrane</keyword>
<keyword id="KW-1003">Cell membrane</keyword>
<keyword id="KW-0472">Membrane</keyword>
<keyword id="KW-0547">Nucleotide-binding</keyword>
<keyword id="KW-0677">Repeat</keyword>
<keyword id="KW-0762">Sugar transport</keyword>
<keyword id="KW-1278">Translocase</keyword>
<keyword id="KW-0813">Transport</keyword>
<reference key="1">
    <citation type="journal article" date="2005" name="BMC Genomics">
        <title>Bacterial genome adaptation to niches: divergence of the potential virulence genes in three Burkholderia species of different survival strategies.</title>
        <authorList>
            <person name="Kim H.S."/>
            <person name="Schell M.A."/>
            <person name="Yu Y."/>
            <person name="Ulrich R.L."/>
            <person name="Sarria S.H."/>
            <person name="Nierman W.C."/>
            <person name="DeShazer D."/>
        </authorList>
    </citation>
    <scope>NUCLEOTIDE SEQUENCE [LARGE SCALE GENOMIC DNA]</scope>
    <source>
        <strain>ATCC 700388 / DSM 13276 / CCUG 48851 / CIP 106301 / E264</strain>
    </source>
</reference>
<organism>
    <name type="scientific">Burkholderia thailandensis (strain ATCC 700388 / DSM 13276 / CCUG 48851 / CIP 106301 / E264)</name>
    <dbReference type="NCBI Taxonomy" id="271848"/>
    <lineage>
        <taxon>Bacteria</taxon>
        <taxon>Pseudomonadati</taxon>
        <taxon>Pseudomonadota</taxon>
        <taxon>Betaproteobacteria</taxon>
        <taxon>Burkholderiales</taxon>
        <taxon>Burkholderiaceae</taxon>
        <taxon>Burkholderia</taxon>
        <taxon>pseudomallei group</taxon>
    </lineage>
</organism>
<comment type="function">
    <text evidence="1">Part of the ABC transporter complex RbsABC involved in ribose import. Responsible for energy coupling to the transport system.</text>
</comment>
<comment type="catalytic activity">
    <reaction evidence="1">
        <text>D-ribose(out) + ATP + H2O = D-ribose(in) + ADP + phosphate + H(+)</text>
        <dbReference type="Rhea" id="RHEA:29903"/>
        <dbReference type="ChEBI" id="CHEBI:15377"/>
        <dbReference type="ChEBI" id="CHEBI:15378"/>
        <dbReference type="ChEBI" id="CHEBI:30616"/>
        <dbReference type="ChEBI" id="CHEBI:43474"/>
        <dbReference type="ChEBI" id="CHEBI:47013"/>
        <dbReference type="ChEBI" id="CHEBI:456216"/>
        <dbReference type="EC" id="7.5.2.7"/>
    </reaction>
</comment>
<comment type="subunit">
    <text evidence="1">The complex is composed of an ATP-binding protein (RbsA), two transmembrane proteins (RbsC) and a solute-binding protein (RbsB).</text>
</comment>
<comment type="subcellular location">
    <subcellularLocation>
        <location evidence="1">Cell inner membrane</location>
        <topology evidence="1">Peripheral membrane protein</topology>
    </subcellularLocation>
</comment>
<comment type="similarity">
    <text evidence="1">Belongs to the ABC transporter superfamily. Ribose importer (TC 3.A.1.2.1) family.</text>
</comment>
<comment type="sequence caution" evidence="2">
    <conflict type="erroneous initiation">
        <sequence resource="EMBL-CDS" id="ABC39265"/>
    </conflict>
</comment>
<proteinExistence type="inferred from homology"/>
<sequence length="506" mass="55306">MDTILALTGITKRFPGVVALRGIDLRVARGEIHALLGENGAGKSTLMKILCGIYPPDEGTIAIDGEPRRFANHHDAIAAGVGIVFQEFSLIPDLNAVDNLFLGREWRGRLGLRDRARMRRAAADIFARLGMAVDLSAPVRELSVAQQQFVEIGKALSLDARVLILDEPTATLTPAEAARLFGVMRELKRQGVAMIFISHHLDEIFEVCDRITVLRDGQYVGTTQRARTDVGALVEMMVGRRIEHSFPPKPPLARDAAAVLEVDALQVRENGPVNRFALREGEILGFAGLVGSGRTSSALALIGAKPARVRRMRLRGRAVRLSGPADALAAGIGLLPESRKTQGLITEFSIRHNVAINNLGKHRRLRWFVDAAAEARATRELMKRLGVKAPTPDTRVDTLSGGNQQKVVIARWLNHHTRILIFDEPTRGIDIGAKAEIYQLMRELTARGYSIVLISSELPEIVGMCDRVAVFRQGRIEAVLDGDAIDANTVMTYATSDARGANHEHA</sequence>
<accession>Q2SVU4</accession>
<dbReference type="EC" id="7.5.2.7" evidence="1"/>
<dbReference type="EMBL" id="CP000086">
    <property type="protein sequence ID" value="ABC39265.1"/>
    <property type="status" value="ALT_INIT"/>
    <property type="molecule type" value="Genomic_DNA"/>
</dbReference>
<dbReference type="RefSeq" id="WP_009891226.1">
    <property type="nucleotide sequence ID" value="NZ_CM000438.1"/>
</dbReference>
<dbReference type="SMR" id="Q2SVU4"/>
<dbReference type="KEGG" id="bte:BTH_I2434"/>
<dbReference type="HOGENOM" id="CLU_000604_92_3_4"/>
<dbReference type="Proteomes" id="UP000001930">
    <property type="component" value="Chromosome I"/>
</dbReference>
<dbReference type="GO" id="GO:0005886">
    <property type="term" value="C:plasma membrane"/>
    <property type="evidence" value="ECO:0007669"/>
    <property type="project" value="UniProtKB-SubCell"/>
</dbReference>
<dbReference type="GO" id="GO:0015611">
    <property type="term" value="F:ABC-type D-ribose transporter activity"/>
    <property type="evidence" value="ECO:0007669"/>
    <property type="project" value="UniProtKB-EC"/>
</dbReference>
<dbReference type="GO" id="GO:0005524">
    <property type="term" value="F:ATP binding"/>
    <property type="evidence" value="ECO:0007669"/>
    <property type="project" value="UniProtKB-KW"/>
</dbReference>
<dbReference type="GO" id="GO:0016887">
    <property type="term" value="F:ATP hydrolysis activity"/>
    <property type="evidence" value="ECO:0007669"/>
    <property type="project" value="InterPro"/>
</dbReference>
<dbReference type="CDD" id="cd03216">
    <property type="entry name" value="ABC_Carb_Monos_I"/>
    <property type="match status" value="1"/>
</dbReference>
<dbReference type="CDD" id="cd03215">
    <property type="entry name" value="ABC_Carb_Monos_II"/>
    <property type="match status" value="1"/>
</dbReference>
<dbReference type="FunFam" id="3.40.50.300:FF:000127">
    <property type="entry name" value="Ribose import ATP-binding protein RbsA"/>
    <property type="match status" value="1"/>
</dbReference>
<dbReference type="Gene3D" id="3.40.50.300">
    <property type="entry name" value="P-loop containing nucleotide triphosphate hydrolases"/>
    <property type="match status" value="2"/>
</dbReference>
<dbReference type="InterPro" id="IPR003593">
    <property type="entry name" value="AAA+_ATPase"/>
</dbReference>
<dbReference type="InterPro" id="IPR050107">
    <property type="entry name" value="ABC_carbohydrate_import_ATPase"/>
</dbReference>
<dbReference type="InterPro" id="IPR003439">
    <property type="entry name" value="ABC_transporter-like_ATP-bd"/>
</dbReference>
<dbReference type="InterPro" id="IPR017871">
    <property type="entry name" value="ABC_transporter-like_CS"/>
</dbReference>
<dbReference type="InterPro" id="IPR027417">
    <property type="entry name" value="P-loop_NTPase"/>
</dbReference>
<dbReference type="PANTHER" id="PTHR43790">
    <property type="entry name" value="CARBOHYDRATE TRANSPORT ATP-BINDING PROTEIN MG119-RELATED"/>
    <property type="match status" value="1"/>
</dbReference>
<dbReference type="PANTHER" id="PTHR43790:SF3">
    <property type="entry name" value="D-ALLOSE IMPORT ATP-BINDING PROTEIN ALSA-RELATED"/>
    <property type="match status" value="1"/>
</dbReference>
<dbReference type="Pfam" id="PF00005">
    <property type="entry name" value="ABC_tran"/>
    <property type="match status" value="2"/>
</dbReference>
<dbReference type="SMART" id="SM00382">
    <property type="entry name" value="AAA"/>
    <property type="match status" value="2"/>
</dbReference>
<dbReference type="SUPFAM" id="SSF52540">
    <property type="entry name" value="P-loop containing nucleoside triphosphate hydrolases"/>
    <property type="match status" value="2"/>
</dbReference>
<dbReference type="PROSITE" id="PS00211">
    <property type="entry name" value="ABC_TRANSPORTER_1"/>
    <property type="match status" value="1"/>
</dbReference>
<dbReference type="PROSITE" id="PS50893">
    <property type="entry name" value="ABC_TRANSPORTER_2"/>
    <property type="match status" value="2"/>
</dbReference>
<dbReference type="PROSITE" id="PS51254">
    <property type="entry name" value="RBSA"/>
    <property type="match status" value="1"/>
</dbReference>